<comment type="function">
    <text evidence="8">Endo-acting xylanase which specifically cleaves internal linkages on the xylan backbone, releasing xylooligosaccharides. Is also probably able, via its C-terminal domain, to remove acetyl groups from acetylated xylan, and thus it is probably capable of hydrolyzing acetylated xylan.</text>
</comment>
<comment type="catalytic activity">
    <reaction evidence="8">
        <text>Endohydrolysis of (1-&gt;4)-beta-D-xylosidic linkages in xylans.</text>
        <dbReference type="EC" id="3.2.1.8"/>
    </reaction>
</comment>
<comment type="biophysicochemical properties">
    <phDependence>
        <text>Optimum pH is 5.6. Active from pH 4.0 to 8.0.</text>
    </phDependence>
    <temperatureDependence>
        <text>Optimum temperature is 38 degrees Celsius.</text>
    </temperatureDependence>
</comment>
<comment type="pathway">
    <text>Glycan degradation; xylan degradation.</text>
</comment>
<comment type="subcellular location">
    <subcellularLocation>
        <location evidence="8 9">Secreted</location>
    </subcellularLocation>
</comment>
<comment type="domain">
    <text evidence="7">Consists of three domains: two complementary catalytic domains and one substrate-binding module.</text>
</comment>
<comment type="PTM">
    <text>In the later growth phases, seems to undergo a proteolytic cleavage into a 30 kDa protein possessing xylanolytic activity.</text>
</comment>
<comment type="biotechnology">
    <text evidence="8">Could be used as a feed additive for animals in order to diminish health problems due to undigested plant fiber and enhance proliferation of beneficial microflora.</text>
</comment>
<comment type="similarity">
    <text evidence="9">Belongs to the glycosyl hydrolase 11 (cellulase G) family.</text>
</comment>
<protein>
    <recommendedName>
        <fullName>Bifunctional xylanase/deacetylase</fullName>
    </recommendedName>
    <domain>
        <recommendedName>
            <fullName>Endo-1,4-beta-xylanase 11A</fullName>
            <ecNumber>3.2.1.8</ecNumber>
        </recommendedName>
        <alternativeName>
            <fullName>Xylanase XynT</fullName>
        </alternativeName>
        <alternativeName>
            <fullName>Xylanase xyn11A</fullName>
        </alternativeName>
    </domain>
    <domain>
        <recommendedName>
            <fullName>Acetylated xylan deacetylase</fullName>
            <ecNumber>3.5.1.-</ecNumber>
        </recommendedName>
    </domain>
</protein>
<reference key="1">
    <citation type="journal article" date="2006" name="Folia Microbiol. (Praha)">
        <title>Xyn11A, a multidomain multicatalytic enzyme from Pseudobutyrivibrio xylanivorcans Mz5T.</title>
        <authorList>
            <person name="Cepeljnik T."/>
            <person name="Rincon M.T."/>
            <person name="Flint H.J."/>
            <person name="Marinsek-Logar R."/>
        </authorList>
    </citation>
    <scope>NUCLEOTIDE SEQUENCE [GENOMIC DNA]</scope>
    <scope>DOMAIN ORGANIZATION</scope>
    <source>
        <strain>ATCC BAA-455 / DSM 14809 / Mz 5</strain>
    </source>
</reference>
<reference evidence="9" key="2">
    <citation type="journal article" date="2004" name="Enzyme Microb. Technol.">
        <title>Isolation and characterization of the Pseudobutyrivibrio xylanivorans Mz5T xylanase XynT -- the first family 11 endoxylanase from rumen Butyrivibrio-related bacteria.</title>
        <authorList>
            <person name="Cepeljnik T."/>
            <person name="Krizaj I."/>
            <person name="Marinsek-Logar R."/>
        </authorList>
    </citation>
    <scope>NUCLEOTIDE SEQUENCE [GENOMIC DNA] OF 27-193</scope>
    <scope>PROTEIN SEQUENCE OF 15-39</scope>
    <scope>FUNCTION</scope>
    <scope>CATALYTIC ACTIVITY</scope>
    <scope>SUBSTRATE SPECIFICITY</scope>
    <scope>SUBCELLULAR LOCATION</scope>
    <scope>BIOTECHNOLOGY</scope>
    <source>
        <strain>ATCC BAA-455 / DSM 14809 / Mz 5</strain>
    </source>
</reference>
<keyword id="KW-0119">Carbohydrate metabolism</keyword>
<keyword id="KW-0903">Direct protein sequencing</keyword>
<keyword id="KW-0326">Glycosidase</keyword>
<keyword id="KW-0378">Hydrolase</keyword>
<keyword id="KW-0511">Multifunctional enzyme</keyword>
<keyword id="KW-0624">Polysaccharide degradation</keyword>
<keyword id="KW-0964">Secreted</keyword>
<keyword id="KW-0732">Signal</keyword>
<keyword id="KW-0858">Xylan degradation</keyword>
<organism>
    <name type="scientific">Pseudobutyrivibrio xylanivorans</name>
    <dbReference type="NCBI Taxonomy" id="185007"/>
    <lineage>
        <taxon>Bacteria</taxon>
        <taxon>Bacillati</taxon>
        <taxon>Bacillota</taxon>
        <taxon>Clostridia</taxon>
        <taxon>Lachnospirales</taxon>
        <taxon>Lachnospiraceae</taxon>
        <taxon>Pseudobutyrivibrio</taxon>
    </lineage>
</organism>
<name>XY11A_PSEXY</name>
<accession>P83513</accession>
<sequence>MSATLLVPSMTVKAADTIYNNKTGNQDGYDYELWKDTGNTSMTLNAGGTFDCSWSNINNALFRKGKKFDSTQTYQQIGNITFDYGCDYRPNGNSYLCVYGWTVDPLVEYYIVDSWGTWRPPGGTPKGQIQVDGGTYDVYETTRYNAPSIQGDTTFKQYFSVRTSKRTSGTISVSEHFKAWERMGMRCGNFMKPALNIEGYQSSGSASVYKNNMTIGGSSSSSGNQGGNQGGNTGNENAGNNLVTVADADKIQCETMTKSGQYTGNISSPFNGVALYANNDAVKYTQYFASGTHDFTLRGCSNNNKMARVDLKIGGQNKGTFYYGDSYPAEYTIKNVSHGTGNQTIELVVTADDGQWDAYLDYFNNSVEPGCSLVPGAVVVLVALGSSSNTGNNSGTNTQNQKLIALTFDDGPSSTTSQVLDMLEKYNVKATFFLIGQNVNSNTASIVQRQVKMGCELACHSYTHEDMTKMNASQIRNQIDWTASAIKNTAGVDVKFFRPPYISVNNTMYQNIDLPFIQGSMHNDWESSTSASQRVNSVLSSAKDGDIILLHDFQGNSQTVSALPQIIEGLKNQGYTFVTVSELFEMKGVNPNVEYKIWSNVK</sequence>
<evidence type="ECO:0000255" key="1">
    <source>
        <dbReference type="PROSITE-ProRule" id="PRU00523"/>
    </source>
</evidence>
<evidence type="ECO:0000255" key="2">
    <source>
        <dbReference type="PROSITE-ProRule" id="PRU01014"/>
    </source>
</evidence>
<evidence type="ECO:0000255" key="3">
    <source>
        <dbReference type="PROSITE-ProRule" id="PRU01097"/>
    </source>
</evidence>
<evidence type="ECO:0000255" key="4">
    <source>
        <dbReference type="PROSITE-ProRule" id="PRU10062"/>
    </source>
</evidence>
<evidence type="ECO:0000255" key="5">
    <source>
        <dbReference type="PROSITE-ProRule" id="PRU10063"/>
    </source>
</evidence>
<evidence type="ECO:0000256" key="6">
    <source>
        <dbReference type="SAM" id="MobiDB-lite"/>
    </source>
</evidence>
<evidence type="ECO:0000269" key="7">
    <source>
    </source>
</evidence>
<evidence type="ECO:0000269" key="8">
    <source ref="2"/>
</evidence>
<evidence type="ECO:0000305" key="9"/>
<gene>
    <name type="primary">xyn11A</name>
    <name type="synonym">xynT</name>
</gene>
<proteinExistence type="evidence at protein level"/>
<feature type="signal peptide" evidence="8">
    <location>
        <begin position="1"/>
        <end position="14"/>
    </location>
</feature>
<feature type="chain" id="PRO_0000184070" description="Bifunctional xylanase/deacetylase">
    <location>
        <begin position="15"/>
        <end position="602"/>
    </location>
</feature>
<feature type="domain" description="GH11" evidence="3">
    <location>
        <begin position="17"/>
        <end position="211"/>
    </location>
</feature>
<feature type="domain" description="CBM6" evidence="1">
    <location>
        <begin position="249"/>
        <end position="366"/>
    </location>
</feature>
<feature type="domain" description="NodB homology" evidence="2">
    <location>
        <begin position="402"/>
        <end position="578"/>
    </location>
</feature>
<feature type="region of interest" description="Disordered" evidence="6">
    <location>
        <begin position="216"/>
        <end position="240"/>
    </location>
</feature>
<feature type="compositionally biased region" description="Gly residues" evidence="6">
    <location>
        <begin position="224"/>
        <end position="233"/>
    </location>
</feature>
<feature type="active site" description="Nucleophile" evidence="4">
    <location>
        <position position="108"/>
    </location>
</feature>
<feature type="active site" description="Proton donor" evidence="5">
    <location>
        <position position="198"/>
    </location>
</feature>
<dbReference type="EC" id="3.2.1.8"/>
<dbReference type="EC" id="3.5.1.-"/>
<dbReference type="EMBL" id="AJ543424">
    <property type="protein sequence ID" value="CAD65888.2"/>
    <property type="molecule type" value="Genomic_DNA"/>
</dbReference>
<dbReference type="SMR" id="P83513"/>
<dbReference type="CAZy" id="CBM36">
    <property type="family name" value="Carbohydrate-Binding Module Family 36"/>
</dbReference>
<dbReference type="CAZy" id="GH11">
    <property type="family name" value="Glycoside Hydrolase Family 11"/>
</dbReference>
<dbReference type="BioCyc" id="MetaCyc:MONOMER-17647"/>
<dbReference type="UniPathway" id="UPA00114"/>
<dbReference type="GO" id="GO:0005576">
    <property type="term" value="C:extracellular region"/>
    <property type="evidence" value="ECO:0007669"/>
    <property type="project" value="UniProtKB-SubCell"/>
</dbReference>
<dbReference type="GO" id="GO:0030246">
    <property type="term" value="F:carbohydrate binding"/>
    <property type="evidence" value="ECO:0007669"/>
    <property type="project" value="InterPro"/>
</dbReference>
<dbReference type="GO" id="GO:0031176">
    <property type="term" value="F:endo-1,4-beta-xylanase activity"/>
    <property type="evidence" value="ECO:0007669"/>
    <property type="project" value="UniProtKB-EC"/>
</dbReference>
<dbReference type="GO" id="GO:0016810">
    <property type="term" value="F:hydrolase activity, acting on carbon-nitrogen (but not peptide) bonds"/>
    <property type="evidence" value="ECO:0007669"/>
    <property type="project" value="InterPro"/>
</dbReference>
<dbReference type="GO" id="GO:0045493">
    <property type="term" value="P:xylan catabolic process"/>
    <property type="evidence" value="ECO:0007669"/>
    <property type="project" value="UniProtKB-UniPathway"/>
</dbReference>
<dbReference type="CDD" id="cd04078">
    <property type="entry name" value="CBM36_xylanase-like"/>
    <property type="match status" value="1"/>
</dbReference>
<dbReference type="CDD" id="cd10954">
    <property type="entry name" value="CE4_CtAXE_like"/>
    <property type="match status" value="1"/>
</dbReference>
<dbReference type="Gene3D" id="2.60.120.180">
    <property type="match status" value="1"/>
</dbReference>
<dbReference type="Gene3D" id="2.60.120.260">
    <property type="entry name" value="Galactose-binding domain-like"/>
    <property type="match status" value="1"/>
</dbReference>
<dbReference type="Gene3D" id="3.20.20.370">
    <property type="entry name" value="Glycoside hydrolase/deacetylase"/>
    <property type="match status" value="1"/>
</dbReference>
<dbReference type="InterPro" id="IPR005084">
    <property type="entry name" value="CBM6"/>
</dbReference>
<dbReference type="InterPro" id="IPR013320">
    <property type="entry name" value="ConA-like_dom_sf"/>
</dbReference>
<dbReference type="InterPro" id="IPR008979">
    <property type="entry name" value="Galactose-bd-like_sf"/>
</dbReference>
<dbReference type="InterPro" id="IPR013319">
    <property type="entry name" value="GH11/12"/>
</dbReference>
<dbReference type="InterPro" id="IPR018208">
    <property type="entry name" value="GH11_AS_1"/>
</dbReference>
<dbReference type="InterPro" id="IPR033119">
    <property type="entry name" value="GH11_AS_2"/>
</dbReference>
<dbReference type="InterPro" id="IPR033123">
    <property type="entry name" value="GH11_dom"/>
</dbReference>
<dbReference type="InterPro" id="IPR011330">
    <property type="entry name" value="Glyco_hydro/deAcase_b/a-brl"/>
</dbReference>
<dbReference type="InterPro" id="IPR001137">
    <property type="entry name" value="Glyco_hydro_11"/>
</dbReference>
<dbReference type="InterPro" id="IPR002509">
    <property type="entry name" value="NODB_dom"/>
</dbReference>
<dbReference type="PANTHER" id="PTHR46828">
    <property type="entry name" value="ENDO-1,4-BETA-XYLANASE A-RELATED"/>
    <property type="match status" value="1"/>
</dbReference>
<dbReference type="PANTHER" id="PTHR46828:SF2">
    <property type="entry name" value="ENDO-1,4-BETA-XYLANASE A-RELATED"/>
    <property type="match status" value="1"/>
</dbReference>
<dbReference type="Pfam" id="PF03422">
    <property type="entry name" value="CBM_6"/>
    <property type="match status" value="1"/>
</dbReference>
<dbReference type="Pfam" id="PF00457">
    <property type="entry name" value="Glyco_hydro_11"/>
    <property type="match status" value="1"/>
</dbReference>
<dbReference type="Pfam" id="PF01522">
    <property type="entry name" value="Polysacc_deac_1"/>
    <property type="match status" value="1"/>
</dbReference>
<dbReference type="PRINTS" id="PR00911">
    <property type="entry name" value="GLHYDRLASE11"/>
</dbReference>
<dbReference type="SUPFAM" id="SSF49899">
    <property type="entry name" value="Concanavalin A-like lectins/glucanases"/>
    <property type="match status" value="1"/>
</dbReference>
<dbReference type="SUPFAM" id="SSF49785">
    <property type="entry name" value="Galactose-binding domain-like"/>
    <property type="match status" value="1"/>
</dbReference>
<dbReference type="SUPFAM" id="SSF88713">
    <property type="entry name" value="Glycoside hydrolase/deacetylase"/>
    <property type="match status" value="1"/>
</dbReference>
<dbReference type="PROSITE" id="PS51175">
    <property type="entry name" value="CBM6"/>
    <property type="match status" value="1"/>
</dbReference>
<dbReference type="PROSITE" id="PS00776">
    <property type="entry name" value="GH11_1"/>
    <property type="match status" value="1"/>
</dbReference>
<dbReference type="PROSITE" id="PS00777">
    <property type="entry name" value="GH11_2"/>
    <property type="match status" value="1"/>
</dbReference>
<dbReference type="PROSITE" id="PS51761">
    <property type="entry name" value="GH11_3"/>
    <property type="match status" value="1"/>
</dbReference>
<dbReference type="PROSITE" id="PS51677">
    <property type="entry name" value="NODB"/>
    <property type="match status" value="1"/>
</dbReference>